<feature type="chain" id="PRO_1000077112" description="5-methyltetrahydropteroyltriglutamate--homocysteine methyltransferase">
    <location>
        <begin position="1"/>
        <end position="775"/>
    </location>
</feature>
<feature type="active site" description="Proton donor" evidence="1">
    <location>
        <position position="698"/>
    </location>
</feature>
<feature type="binding site" evidence="1">
    <location>
        <begin position="16"/>
        <end position="19"/>
    </location>
    <ligand>
        <name>5-methyltetrahydropteroyltri-L-glutamate</name>
        <dbReference type="ChEBI" id="CHEBI:58207"/>
    </ligand>
</feature>
<feature type="binding site" evidence="1">
    <location>
        <position position="115"/>
    </location>
    <ligand>
        <name>5-methyltetrahydropteroyltri-L-glutamate</name>
        <dbReference type="ChEBI" id="CHEBI:58207"/>
    </ligand>
</feature>
<feature type="binding site" evidence="1">
    <location>
        <begin position="435"/>
        <end position="437"/>
    </location>
    <ligand>
        <name>L-homocysteine</name>
        <dbReference type="ChEBI" id="CHEBI:58199"/>
    </ligand>
</feature>
<feature type="binding site" evidence="1">
    <location>
        <begin position="435"/>
        <end position="437"/>
    </location>
    <ligand>
        <name>L-methionine</name>
        <dbReference type="ChEBI" id="CHEBI:57844"/>
    </ligand>
</feature>
<feature type="binding site" evidence="1">
    <location>
        <position position="488"/>
    </location>
    <ligand>
        <name>L-homocysteine</name>
        <dbReference type="ChEBI" id="CHEBI:58199"/>
    </ligand>
</feature>
<feature type="binding site" evidence="1">
    <location>
        <position position="488"/>
    </location>
    <ligand>
        <name>L-methionine</name>
        <dbReference type="ChEBI" id="CHEBI:57844"/>
    </ligand>
</feature>
<feature type="binding site" evidence="1">
    <location>
        <begin position="519"/>
        <end position="520"/>
    </location>
    <ligand>
        <name>5-methyltetrahydropteroyltri-L-glutamate</name>
        <dbReference type="ChEBI" id="CHEBI:58207"/>
    </ligand>
</feature>
<feature type="binding site" evidence="1">
    <location>
        <position position="565"/>
    </location>
    <ligand>
        <name>5-methyltetrahydropteroyltri-L-glutamate</name>
        <dbReference type="ChEBI" id="CHEBI:58207"/>
    </ligand>
</feature>
<feature type="binding site" evidence="1">
    <location>
        <position position="603"/>
    </location>
    <ligand>
        <name>L-homocysteine</name>
        <dbReference type="ChEBI" id="CHEBI:58199"/>
    </ligand>
</feature>
<feature type="binding site" evidence="1">
    <location>
        <position position="603"/>
    </location>
    <ligand>
        <name>L-methionine</name>
        <dbReference type="ChEBI" id="CHEBI:57844"/>
    </ligand>
</feature>
<feature type="binding site" evidence="1">
    <location>
        <position position="609"/>
    </location>
    <ligand>
        <name>5-methyltetrahydropteroyltri-L-glutamate</name>
        <dbReference type="ChEBI" id="CHEBI:58207"/>
    </ligand>
</feature>
<feature type="binding site" evidence="1">
    <location>
        <position position="645"/>
    </location>
    <ligand>
        <name>Zn(2+)</name>
        <dbReference type="ChEBI" id="CHEBI:29105"/>
        <note>catalytic</note>
    </ligand>
</feature>
<feature type="binding site" evidence="1">
    <location>
        <position position="647"/>
    </location>
    <ligand>
        <name>Zn(2+)</name>
        <dbReference type="ChEBI" id="CHEBI:29105"/>
        <note>catalytic</note>
    </ligand>
</feature>
<feature type="binding site" evidence="1">
    <location>
        <position position="669"/>
    </location>
    <ligand>
        <name>Zn(2+)</name>
        <dbReference type="ChEBI" id="CHEBI:29105"/>
        <note>catalytic</note>
    </ligand>
</feature>
<feature type="binding site" evidence="1">
    <location>
        <position position="730"/>
    </location>
    <ligand>
        <name>Zn(2+)</name>
        <dbReference type="ChEBI" id="CHEBI:29105"/>
        <note>catalytic</note>
    </ligand>
</feature>
<dbReference type="EC" id="2.1.1.14" evidence="1"/>
<dbReference type="EMBL" id="CP000890">
    <property type="protein sequence ID" value="ABX78956.1"/>
    <property type="molecule type" value="Genomic_DNA"/>
</dbReference>
<dbReference type="RefSeq" id="WP_012220019.1">
    <property type="nucleotide sequence ID" value="NC_010117.1"/>
</dbReference>
<dbReference type="SMR" id="A9N9C7"/>
<dbReference type="KEGG" id="cbs:COXBURSA331_A0035"/>
<dbReference type="HOGENOM" id="CLU_013175_0_0_6"/>
<dbReference type="UniPathway" id="UPA00051">
    <property type="reaction ID" value="UER00082"/>
</dbReference>
<dbReference type="GO" id="GO:0003871">
    <property type="term" value="F:5-methyltetrahydropteroyltriglutamate-homocysteine S-methyltransferase activity"/>
    <property type="evidence" value="ECO:0007669"/>
    <property type="project" value="UniProtKB-UniRule"/>
</dbReference>
<dbReference type="GO" id="GO:0008270">
    <property type="term" value="F:zinc ion binding"/>
    <property type="evidence" value="ECO:0007669"/>
    <property type="project" value="InterPro"/>
</dbReference>
<dbReference type="GO" id="GO:0009086">
    <property type="term" value="P:methionine biosynthetic process"/>
    <property type="evidence" value="ECO:0007669"/>
    <property type="project" value="UniProtKB-UniRule"/>
</dbReference>
<dbReference type="GO" id="GO:0032259">
    <property type="term" value="P:methylation"/>
    <property type="evidence" value="ECO:0007669"/>
    <property type="project" value="UniProtKB-KW"/>
</dbReference>
<dbReference type="CDD" id="cd03311">
    <property type="entry name" value="CIMS_C_terminal_like"/>
    <property type="match status" value="1"/>
</dbReference>
<dbReference type="CDD" id="cd03312">
    <property type="entry name" value="CIMS_N_terminal_like"/>
    <property type="match status" value="1"/>
</dbReference>
<dbReference type="FunFam" id="3.20.20.210:FF:000002">
    <property type="entry name" value="5-methyltetrahydropteroyltriglutamate--homocysteine methyltransferase"/>
    <property type="match status" value="1"/>
</dbReference>
<dbReference type="FunFam" id="3.20.20.210:FF:000003">
    <property type="entry name" value="5-methyltetrahydropteroyltriglutamate--homocysteine methyltransferase"/>
    <property type="match status" value="1"/>
</dbReference>
<dbReference type="Gene3D" id="3.20.20.210">
    <property type="match status" value="2"/>
</dbReference>
<dbReference type="HAMAP" id="MF_00172">
    <property type="entry name" value="Meth_synth"/>
    <property type="match status" value="1"/>
</dbReference>
<dbReference type="InterPro" id="IPR013215">
    <property type="entry name" value="Cbl-indep_Met_Synth_N"/>
</dbReference>
<dbReference type="InterPro" id="IPR006276">
    <property type="entry name" value="Cobalamin-indep_Met_synthase"/>
</dbReference>
<dbReference type="InterPro" id="IPR002629">
    <property type="entry name" value="Met_Synth_C/arc"/>
</dbReference>
<dbReference type="InterPro" id="IPR038071">
    <property type="entry name" value="UROD/MetE-like_sf"/>
</dbReference>
<dbReference type="NCBIfam" id="TIGR01371">
    <property type="entry name" value="met_syn_B12ind"/>
    <property type="match status" value="1"/>
</dbReference>
<dbReference type="NCBIfam" id="NF003556">
    <property type="entry name" value="PRK05222.1"/>
    <property type="match status" value="1"/>
</dbReference>
<dbReference type="PANTHER" id="PTHR30519">
    <property type="entry name" value="5-METHYLTETRAHYDROPTEROYLTRIGLUTAMATE--HOMOCYSTEINE METHYLTRANSFERASE"/>
    <property type="match status" value="1"/>
</dbReference>
<dbReference type="Pfam" id="PF08267">
    <property type="entry name" value="Meth_synt_1"/>
    <property type="match status" value="1"/>
</dbReference>
<dbReference type="Pfam" id="PF01717">
    <property type="entry name" value="Meth_synt_2"/>
    <property type="match status" value="1"/>
</dbReference>
<dbReference type="PIRSF" id="PIRSF000382">
    <property type="entry name" value="MeTrfase_B12_ind"/>
    <property type="match status" value="1"/>
</dbReference>
<dbReference type="SUPFAM" id="SSF51726">
    <property type="entry name" value="UROD/MetE-like"/>
    <property type="match status" value="2"/>
</dbReference>
<comment type="function">
    <text evidence="1">Catalyzes the transfer of a methyl group from 5-methyltetrahydrofolate to homocysteine resulting in methionine formation.</text>
</comment>
<comment type="catalytic activity">
    <reaction evidence="1">
        <text>5-methyltetrahydropteroyltri-L-glutamate + L-homocysteine = tetrahydropteroyltri-L-glutamate + L-methionine</text>
        <dbReference type="Rhea" id="RHEA:21196"/>
        <dbReference type="ChEBI" id="CHEBI:57844"/>
        <dbReference type="ChEBI" id="CHEBI:58140"/>
        <dbReference type="ChEBI" id="CHEBI:58199"/>
        <dbReference type="ChEBI" id="CHEBI:58207"/>
        <dbReference type="EC" id="2.1.1.14"/>
    </reaction>
</comment>
<comment type="cofactor">
    <cofactor evidence="1">
        <name>Zn(2+)</name>
        <dbReference type="ChEBI" id="CHEBI:29105"/>
    </cofactor>
    <text evidence="1">Binds 1 zinc ion per subunit.</text>
</comment>
<comment type="pathway">
    <text evidence="1">Amino-acid biosynthesis; L-methionine biosynthesis via de novo pathway; L-methionine from L-homocysteine (MetE route): step 1/1.</text>
</comment>
<comment type="similarity">
    <text evidence="1">Belongs to the vitamin-B12 independent methionine synthase family.</text>
</comment>
<proteinExistence type="inferred from homology"/>
<protein>
    <recommendedName>
        <fullName evidence="1">5-methyltetrahydropteroyltriglutamate--homocysteine methyltransferase</fullName>
        <ecNumber evidence="1">2.1.1.14</ecNumber>
    </recommendedName>
    <alternativeName>
        <fullName evidence="1">Cobalamin-independent methionine synthase</fullName>
    </alternativeName>
    <alternativeName>
        <fullName evidence="1">Methionine synthase, vitamin-B12 independent isozyme</fullName>
    </alternativeName>
</protein>
<organism>
    <name type="scientific">Coxiella burnetii (strain RSA 331 / Henzerling II)</name>
    <dbReference type="NCBI Taxonomy" id="360115"/>
    <lineage>
        <taxon>Bacteria</taxon>
        <taxon>Pseudomonadati</taxon>
        <taxon>Pseudomonadota</taxon>
        <taxon>Gammaproteobacteria</taxon>
        <taxon>Legionellales</taxon>
        <taxon>Coxiellaceae</taxon>
        <taxon>Coxiella</taxon>
    </lineage>
</organism>
<keyword id="KW-0028">Amino-acid biosynthesis</keyword>
<keyword id="KW-0479">Metal-binding</keyword>
<keyword id="KW-0486">Methionine biosynthesis</keyword>
<keyword id="KW-0489">Methyltransferase</keyword>
<keyword id="KW-0677">Repeat</keyword>
<keyword id="KW-0808">Transferase</keyword>
<keyword id="KW-0862">Zinc</keyword>
<sequence length="775" mass="88437">MVYAHNLGFPRIGIKREMKKTVEAYWRGEISQQQLQQQAIELQLTNWKIQAEAGVDLIPVGDFSWYDHVLDMAVRVGAIPSRFKALNSNITDTMFCMARGQAPNGIETSACEMTKWFDTNYHYIVPEFTTNQSFELHHDDLFKSTKLALENNYRAKPVILGPLSFLWLGKCKGESFNKLLLLEKLLPVYAEIFEQLSSLGVEWVQVDEPILVLDLPPEWQQAFLTTYQQLNFFNLKCLLATYFGSLDDNLSLTCQLPVDGLHIDYCRAPDQLDSVLSQLPAEKILSVGIIDGRNIWCNDLNRSLTLLENIQSSLGDRLWVAPSCSLLHVPIDLDQENKLDVELKSWFAFAKQKVAEAAFLTRGLREGRESIGAELKKNEEVIISRKTSKRIHNPNVEKKAASVTERLMRRQHEHSIRKNKQTAQLNLPLFPTTTIGSFPQTSQIRCLRRDYKQGKIDDALYEEKIRQEIAEVIGIQVKLGLDVLVHGELERNDMVEYFGELLDGIAITSNGWVQSYGSRCVKPPIIFGDVSRERPMTLRWIEYAQSLTTKSVKGMLTGPVTILAWSFVRDDQPRSQTAKQIALALRDEVQDLERSGVRVIQIDEPAFRECLPLRKAAWQDYLEWAVKCFRLASCGVKDETQIHTHMCYSEFNDIIEAIAALDADVITIESSRSEMEILKSFEKFAYPNDIGPGIYDIHSPRIPRVAEIEELAVRALQYIPIERLWINPDCGLKTRNWEETKEALSRMVDAAKHLRKAFSSEKTPTIDLELQPAST</sequence>
<name>METE_COXBR</name>
<reference key="1">
    <citation type="submission" date="2007-11" db="EMBL/GenBank/DDBJ databases">
        <title>Genome sequencing of phylogenetically and phenotypically diverse Coxiella burnetii isolates.</title>
        <authorList>
            <person name="Seshadri R."/>
            <person name="Samuel J.E."/>
        </authorList>
    </citation>
    <scope>NUCLEOTIDE SEQUENCE [LARGE SCALE GENOMIC DNA]</scope>
    <source>
        <strain>RSA 331 / Henzerling II</strain>
    </source>
</reference>
<evidence type="ECO:0000255" key="1">
    <source>
        <dbReference type="HAMAP-Rule" id="MF_00172"/>
    </source>
</evidence>
<accession>A9N9C7</accession>
<gene>
    <name evidence="1" type="primary">metE</name>
    <name type="ordered locus">COXBURSA331_A0035</name>
</gene>